<sequence length="279" mass="31465">MNVLQAPFVEEMVKTTKNLYRLGWDERNGGNISYLLKEEEILPFLNPTQVLRKIPMKFDATKLAGKYFIVTGSGKYFKNVCDASSENLGILRVSENGQELELLWGLEDEAVPTSELPSHFMSHIARLAVDPENRIVMHNHASHLLAMSFTHELDEKVFTRTLWQMCTECLVVFPDGVGIIPWLVPGTNEIGVATAEKMKESRLVLWPQHGIYGTGRDMDEVFGLIETAEKAAEVYTYVCAQGGVRQTISDADLWRLAEAFGVTPKVGYLEEKVSKRRKL</sequence>
<reference key="1">
    <citation type="journal article" date="2003" name="Science">
        <title>Role of mobile DNA in the evolution of vancomycin-resistant Enterococcus faecalis.</title>
        <authorList>
            <person name="Paulsen I.T."/>
            <person name="Banerjei L."/>
            <person name="Myers G.S.A."/>
            <person name="Nelson K.E."/>
            <person name="Seshadri R."/>
            <person name="Read T.D."/>
            <person name="Fouts D.E."/>
            <person name="Eisen J.A."/>
            <person name="Gill S.R."/>
            <person name="Heidelberg J.F."/>
            <person name="Tettelin H."/>
            <person name="Dodson R.J."/>
            <person name="Umayam L.A."/>
            <person name="Brinkac L.M."/>
            <person name="Beanan M.J."/>
            <person name="Daugherty S.C."/>
            <person name="DeBoy R.T."/>
            <person name="Durkin S.A."/>
            <person name="Kolonay J.F."/>
            <person name="Madupu R."/>
            <person name="Nelson W.C."/>
            <person name="Vamathevan J.J."/>
            <person name="Tran B."/>
            <person name="Upton J."/>
            <person name="Hansen T."/>
            <person name="Shetty J."/>
            <person name="Khouri H.M."/>
            <person name="Utterback T.R."/>
            <person name="Radune D."/>
            <person name="Ketchum K.A."/>
            <person name="Dougherty B.A."/>
            <person name="Fraser C.M."/>
        </authorList>
    </citation>
    <scope>NUCLEOTIDE SEQUENCE [LARGE SCALE GENOMIC DNA]</scope>
    <source>
        <strain>ATCC 700802 / V583</strain>
    </source>
</reference>
<proteinExistence type="inferred from homology"/>
<name>RHAD_ENTFA</name>
<protein>
    <recommendedName>
        <fullName evidence="1">Rhamnulose-1-phosphate aldolase</fullName>
        <ecNumber evidence="1">4.1.2.19</ecNumber>
    </recommendedName>
</protein>
<evidence type="ECO:0000255" key="1">
    <source>
        <dbReference type="HAMAP-Rule" id="MF_00770"/>
    </source>
</evidence>
<accession>Q838L1</accession>
<keyword id="KW-0963">Cytoplasm</keyword>
<keyword id="KW-0456">Lyase</keyword>
<keyword id="KW-0479">Metal-binding</keyword>
<keyword id="KW-1185">Reference proteome</keyword>
<keyword id="KW-0684">Rhamnose metabolism</keyword>
<keyword id="KW-0862">Zinc</keyword>
<comment type="function">
    <text evidence="1">Catalyzes the reversible cleavage of L-rhamnulose-1-phosphate to dihydroxyacetone phosphate (DHAP) and L-lactaldehyde.</text>
</comment>
<comment type="catalytic activity">
    <reaction evidence="1">
        <text>L-rhamnulose 1-phosphate = (S)-lactaldehyde + dihydroxyacetone phosphate</text>
        <dbReference type="Rhea" id="RHEA:19689"/>
        <dbReference type="ChEBI" id="CHEBI:18041"/>
        <dbReference type="ChEBI" id="CHEBI:57642"/>
        <dbReference type="ChEBI" id="CHEBI:58313"/>
        <dbReference type="EC" id="4.1.2.19"/>
    </reaction>
</comment>
<comment type="cofactor">
    <cofactor evidence="1">
        <name>Zn(2+)</name>
        <dbReference type="ChEBI" id="CHEBI:29105"/>
    </cofactor>
    <text evidence="1">Binds 1 zinc ion per subunit.</text>
</comment>
<comment type="pathway">
    <text evidence="1">Carbohydrate degradation; L-rhamnose degradation; glycerone phosphate from L-rhamnose: step 3/3.</text>
</comment>
<comment type="subcellular location">
    <subcellularLocation>
        <location evidence="1">Cytoplasm</location>
    </subcellularLocation>
</comment>
<comment type="similarity">
    <text evidence="1">Belongs to the aldolase class II family. RhaD subfamily.</text>
</comment>
<organism>
    <name type="scientific">Enterococcus faecalis (strain ATCC 700802 / V583)</name>
    <dbReference type="NCBI Taxonomy" id="226185"/>
    <lineage>
        <taxon>Bacteria</taxon>
        <taxon>Bacillati</taxon>
        <taxon>Bacillota</taxon>
        <taxon>Bacilli</taxon>
        <taxon>Lactobacillales</taxon>
        <taxon>Enterococcaceae</taxon>
        <taxon>Enterococcus</taxon>
    </lineage>
</organism>
<dbReference type="EC" id="4.1.2.19" evidence="1"/>
<dbReference type="EMBL" id="AE016830">
    <property type="protein sequence ID" value="AAO80291.1"/>
    <property type="molecule type" value="Genomic_DNA"/>
</dbReference>
<dbReference type="RefSeq" id="NP_814220.1">
    <property type="nucleotide sequence ID" value="NC_004668.1"/>
</dbReference>
<dbReference type="SMR" id="Q838L1"/>
<dbReference type="STRING" id="226185.EF_0435"/>
<dbReference type="EnsemblBacteria" id="AAO80291">
    <property type="protein sequence ID" value="AAO80291"/>
    <property type="gene ID" value="EF_0435"/>
</dbReference>
<dbReference type="KEGG" id="efa:EF0435"/>
<dbReference type="PATRIC" id="fig|226185.9.peg.403"/>
<dbReference type="eggNOG" id="COG0235">
    <property type="taxonomic scope" value="Bacteria"/>
</dbReference>
<dbReference type="HOGENOM" id="CLU_076831_0_0_9"/>
<dbReference type="UniPathway" id="UPA00541">
    <property type="reaction ID" value="UER00603"/>
</dbReference>
<dbReference type="Proteomes" id="UP000001415">
    <property type="component" value="Chromosome"/>
</dbReference>
<dbReference type="GO" id="GO:0005829">
    <property type="term" value="C:cytosol"/>
    <property type="evidence" value="ECO:0007669"/>
    <property type="project" value="TreeGrafter"/>
</dbReference>
<dbReference type="GO" id="GO:0046872">
    <property type="term" value="F:metal ion binding"/>
    <property type="evidence" value="ECO:0007669"/>
    <property type="project" value="UniProtKB-KW"/>
</dbReference>
<dbReference type="GO" id="GO:0008994">
    <property type="term" value="F:rhamnulose-1-phosphate aldolase activity"/>
    <property type="evidence" value="ECO:0007669"/>
    <property type="project" value="UniProtKB-UniRule"/>
</dbReference>
<dbReference type="GO" id="GO:0019323">
    <property type="term" value="P:pentose catabolic process"/>
    <property type="evidence" value="ECO:0007669"/>
    <property type="project" value="TreeGrafter"/>
</dbReference>
<dbReference type="GO" id="GO:0019301">
    <property type="term" value="P:rhamnose catabolic process"/>
    <property type="evidence" value="ECO:0007669"/>
    <property type="project" value="UniProtKB-UniRule"/>
</dbReference>
<dbReference type="Gene3D" id="3.40.225.10">
    <property type="entry name" value="Class II aldolase/adducin N-terminal domain"/>
    <property type="match status" value="1"/>
</dbReference>
<dbReference type="HAMAP" id="MF_00770">
    <property type="entry name" value="RhaD"/>
    <property type="match status" value="1"/>
</dbReference>
<dbReference type="InterPro" id="IPR050197">
    <property type="entry name" value="Aldolase_class_II_sugar_metab"/>
</dbReference>
<dbReference type="InterPro" id="IPR001303">
    <property type="entry name" value="Aldolase_II/adducin_N"/>
</dbReference>
<dbReference type="InterPro" id="IPR036409">
    <property type="entry name" value="Aldolase_II/adducin_N_sf"/>
</dbReference>
<dbReference type="InterPro" id="IPR013447">
    <property type="entry name" value="Rhamnulose-1-P_Aldolase"/>
</dbReference>
<dbReference type="NCBIfam" id="NF002963">
    <property type="entry name" value="PRK03634.1"/>
    <property type="match status" value="1"/>
</dbReference>
<dbReference type="NCBIfam" id="TIGR02624">
    <property type="entry name" value="rhamnu_1P_ald"/>
    <property type="match status" value="1"/>
</dbReference>
<dbReference type="PANTHER" id="PTHR22789:SF0">
    <property type="entry name" value="3-OXO-TETRONATE 4-PHOSPHATE DECARBOXYLASE-RELATED"/>
    <property type="match status" value="1"/>
</dbReference>
<dbReference type="PANTHER" id="PTHR22789">
    <property type="entry name" value="FUCULOSE PHOSPHATE ALDOLASE"/>
    <property type="match status" value="1"/>
</dbReference>
<dbReference type="Pfam" id="PF00596">
    <property type="entry name" value="Aldolase_II"/>
    <property type="match status" value="1"/>
</dbReference>
<dbReference type="SMART" id="SM01007">
    <property type="entry name" value="Aldolase_II"/>
    <property type="match status" value="1"/>
</dbReference>
<dbReference type="SUPFAM" id="SSF53639">
    <property type="entry name" value="AraD/HMP-PK domain-like"/>
    <property type="match status" value="1"/>
</dbReference>
<feature type="chain" id="PRO_0000209660" description="Rhamnulose-1-phosphate aldolase">
    <location>
        <begin position="1"/>
        <end position="279"/>
    </location>
</feature>
<feature type="active site" evidence="1">
    <location>
        <position position="115"/>
    </location>
</feature>
<feature type="binding site" evidence="1">
    <location>
        <position position="138"/>
    </location>
    <ligand>
        <name>Zn(2+)</name>
        <dbReference type="ChEBI" id="CHEBI:29105"/>
    </ligand>
</feature>
<feature type="binding site" evidence="1">
    <location>
        <position position="140"/>
    </location>
    <ligand>
        <name>Zn(2+)</name>
        <dbReference type="ChEBI" id="CHEBI:29105"/>
    </ligand>
</feature>
<feature type="binding site" evidence="1">
    <location>
        <position position="209"/>
    </location>
    <ligand>
        <name>Zn(2+)</name>
        <dbReference type="ChEBI" id="CHEBI:29105"/>
    </ligand>
</feature>
<gene>
    <name evidence="1" type="primary">rhaD</name>
    <name type="ordered locus">EF_0435</name>
</gene>